<comment type="function">
    <text evidence="1">Essential for recycling GMP and indirectly, cGMP.</text>
</comment>
<comment type="catalytic activity">
    <reaction evidence="1">
        <text>GMP + ATP = GDP + ADP</text>
        <dbReference type="Rhea" id="RHEA:20780"/>
        <dbReference type="ChEBI" id="CHEBI:30616"/>
        <dbReference type="ChEBI" id="CHEBI:58115"/>
        <dbReference type="ChEBI" id="CHEBI:58189"/>
        <dbReference type="ChEBI" id="CHEBI:456216"/>
        <dbReference type="EC" id="2.7.4.8"/>
    </reaction>
</comment>
<comment type="subcellular location">
    <subcellularLocation>
        <location evidence="1">Cytoplasm</location>
    </subcellularLocation>
</comment>
<comment type="similarity">
    <text evidence="1">Belongs to the guanylate kinase family.</text>
</comment>
<protein>
    <recommendedName>
        <fullName evidence="1">Guanylate kinase</fullName>
        <ecNumber evidence="1">2.7.4.8</ecNumber>
    </recommendedName>
    <alternativeName>
        <fullName evidence="1">GMP kinase</fullName>
    </alternativeName>
</protein>
<feature type="chain" id="PRO_0000266327" description="Guanylate kinase">
    <location>
        <begin position="1"/>
        <end position="190"/>
    </location>
</feature>
<feature type="domain" description="Guanylate kinase-like" evidence="1">
    <location>
        <begin position="3"/>
        <end position="185"/>
    </location>
</feature>
<feature type="binding site" evidence="1">
    <location>
        <begin position="10"/>
        <end position="17"/>
    </location>
    <ligand>
        <name>ATP</name>
        <dbReference type="ChEBI" id="CHEBI:30616"/>
    </ligand>
</feature>
<name>KGUA_FRAT1</name>
<accession>Q14GD9</accession>
<dbReference type="EC" id="2.7.4.8" evidence="1"/>
<dbReference type="EMBL" id="AM286280">
    <property type="protein sequence ID" value="CAL09486.1"/>
    <property type="molecule type" value="Genomic_DNA"/>
</dbReference>
<dbReference type="RefSeq" id="WP_003022313.1">
    <property type="nucleotide sequence ID" value="NC_008245.1"/>
</dbReference>
<dbReference type="SMR" id="Q14GD9"/>
<dbReference type="KEGG" id="ftf:FTF1470c"/>
<dbReference type="HOGENOM" id="CLU_001715_1_2_6"/>
<dbReference type="GO" id="GO:0005829">
    <property type="term" value="C:cytosol"/>
    <property type="evidence" value="ECO:0007669"/>
    <property type="project" value="TreeGrafter"/>
</dbReference>
<dbReference type="GO" id="GO:0005524">
    <property type="term" value="F:ATP binding"/>
    <property type="evidence" value="ECO:0007669"/>
    <property type="project" value="UniProtKB-UniRule"/>
</dbReference>
<dbReference type="GO" id="GO:0004385">
    <property type="term" value="F:guanylate kinase activity"/>
    <property type="evidence" value="ECO:0007669"/>
    <property type="project" value="UniProtKB-UniRule"/>
</dbReference>
<dbReference type="CDD" id="cd00071">
    <property type="entry name" value="GMPK"/>
    <property type="match status" value="1"/>
</dbReference>
<dbReference type="FunFam" id="3.30.63.10:FF:000005">
    <property type="entry name" value="Guanylate kinase"/>
    <property type="match status" value="1"/>
</dbReference>
<dbReference type="Gene3D" id="3.30.63.10">
    <property type="entry name" value="Guanylate Kinase phosphate binding domain"/>
    <property type="match status" value="1"/>
</dbReference>
<dbReference type="Gene3D" id="3.40.50.300">
    <property type="entry name" value="P-loop containing nucleotide triphosphate hydrolases"/>
    <property type="match status" value="1"/>
</dbReference>
<dbReference type="HAMAP" id="MF_00328">
    <property type="entry name" value="Guanylate_kinase"/>
    <property type="match status" value="1"/>
</dbReference>
<dbReference type="InterPro" id="IPR008145">
    <property type="entry name" value="GK/Ca_channel_bsu"/>
</dbReference>
<dbReference type="InterPro" id="IPR008144">
    <property type="entry name" value="Guanylate_kin-like_dom"/>
</dbReference>
<dbReference type="InterPro" id="IPR017665">
    <property type="entry name" value="Guanylate_kinase"/>
</dbReference>
<dbReference type="InterPro" id="IPR027417">
    <property type="entry name" value="P-loop_NTPase"/>
</dbReference>
<dbReference type="NCBIfam" id="TIGR03263">
    <property type="entry name" value="guanyl_kin"/>
    <property type="match status" value="1"/>
</dbReference>
<dbReference type="PANTHER" id="PTHR23117:SF13">
    <property type="entry name" value="GUANYLATE KINASE"/>
    <property type="match status" value="1"/>
</dbReference>
<dbReference type="PANTHER" id="PTHR23117">
    <property type="entry name" value="GUANYLATE KINASE-RELATED"/>
    <property type="match status" value="1"/>
</dbReference>
<dbReference type="Pfam" id="PF00625">
    <property type="entry name" value="Guanylate_kin"/>
    <property type="match status" value="1"/>
</dbReference>
<dbReference type="SMART" id="SM00072">
    <property type="entry name" value="GuKc"/>
    <property type="match status" value="1"/>
</dbReference>
<dbReference type="SUPFAM" id="SSF52540">
    <property type="entry name" value="P-loop containing nucleoside triphosphate hydrolases"/>
    <property type="match status" value="1"/>
</dbReference>
<dbReference type="PROSITE" id="PS50052">
    <property type="entry name" value="GUANYLATE_KINASE_2"/>
    <property type="match status" value="1"/>
</dbReference>
<proteinExistence type="inferred from homology"/>
<keyword id="KW-0067">ATP-binding</keyword>
<keyword id="KW-0963">Cytoplasm</keyword>
<keyword id="KW-0418">Kinase</keyword>
<keyword id="KW-0547">Nucleotide-binding</keyword>
<keyword id="KW-0808">Transferase</keyword>
<reference key="1">
    <citation type="journal article" date="2007" name="PLoS ONE">
        <title>Genome sequencing shows that European isolates of Francisella tularensis subspecies tularensis are almost identical to US laboratory strain Schu S4.</title>
        <authorList>
            <person name="Chaudhuri R.R."/>
            <person name="Ren C.-P."/>
            <person name="Desmond L."/>
            <person name="Vincent G.A."/>
            <person name="Silman N.J."/>
            <person name="Brehm J.K."/>
            <person name="Elmore M.J."/>
            <person name="Hudson M.J."/>
            <person name="Forsman M."/>
            <person name="Isherwood K.E."/>
            <person name="Gurycova D."/>
            <person name="Minton N.P."/>
            <person name="Titball R.W."/>
            <person name="Pallen M.J."/>
            <person name="Vipond R."/>
        </authorList>
    </citation>
    <scope>NUCLEOTIDE SEQUENCE [LARGE SCALE GENOMIC DNA]</scope>
    <source>
        <strain>FSC 198</strain>
    </source>
</reference>
<organism>
    <name type="scientific">Francisella tularensis subsp. tularensis (strain FSC 198)</name>
    <dbReference type="NCBI Taxonomy" id="393115"/>
    <lineage>
        <taxon>Bacteria</taxon>
        <taxon>Pseudomonadati</taxon>
        <taxon>Pseudomonadota</taxon>
        <taxon>Gammaproteobacteria</taxon>
        <taxon>Thiotrichales</taxon>
        <taxon>Francisellaceae</taxon>
        <taxon>Francisella</taxon>
    </lineage>
</organism>
<evidence type="ECO:0000255" key="1">
    <source>
        <dbReference type="HAMAP-Rule" id="MF_00328"/>
    </source>
</evidence>
<sequence length="190" mass="21857">MNNYIFIVSAPSGAGKSSLLKAFLATDIGKDNYAVAISHTTREPRVGEINSREYYFVTVAEFEQLLSQDGFIEYAKVFKNYYGTSKAELDRLLALGKNIILEIDWQGAQQTRAIYGDRAKSIFILPPSLDELRKRLEKRNTDSKETIDYRMEQAQSEISHADEYDYLLVNDDFSQSLEQFCKYFEQNIQS</sequence>
<gene>
    <name evidence="1" type="primary">gmk</name>
    <name type="ordered locus">FTF1470c</name>
</gene>